<dbReference type="EC" id="2.7.1.148" evidence="1"/>
<dbReference type="EMBL" id="AL591973">
    <property type="protein sequence ID" value="CAC98405.1"/>
    <property type="molecule type" value="Genomic_DNA"/>
</dbReference>
<dbReference type="PIR" id="AG1098">
    <property type="entry name" value="AG1098"/>
</dbReference>
<dbReference type="RefSeq" id="WP_003722719.1">
    <property type="nucleotide sequence ID" value="NZ_CP149495.1"/>
</dbReference>
<dbReference type="SMR" id="Q8YAE1"/>
<dbReference type="STRING" id="169963.gene:17592826"/>
<dbReference type="PaxDb" id="169963-lmo0190"/>
<dbReference type="EnsemblBacteria" id="CAC98405">
    <property type="protein sequence ID" value="CAC98405"/>
    <property type="gene ID" value="CAC98405"/>
</dbReference>
<dbReference type="KEGG" id="lmo:lmo0190"/>
<dbReference type="PATRIC" id="fig|169963.11.peg.195"/>
<dbReference type="eggNOG" id="COG1947">
    <property type="taxonomic scope" value="Bacteria"/>
</dbReference>
<dbReference type="HOGENOM" id="CLU_053057_1_1_9"/>
<dbReference type="OrthoDB" id="9809438at2"/>
<dbReference type="PhylomeDB" id="Q8YAE1"/>
<dbReference type="BioCyc" id="LMON169963:LMO0190-MONOMER"/>
<dbReference type="UniPathway" id="UPA00056">
    <property type="reaction ID" value="UER00094"/>
</dbReference>
<dbReference type="Proteomes" id="UP000000817">
    <property type="component" value="Chromosome"/>
</dbReference>
<dbReference type="GO" id="GO:0050515">
    <property type="term" value="F:4-(cytidine 5'-diphospho)-2-C-methyl-D-erythritol kinase activity"/>
    <property type="evidence" value="ECO:0000318"/>
    <property type="project" value="GO_Central"/>
</dbReference>
<dbReference type="GO" id="GO:0005524">
    <property type="term" value="F:ATP binding"/>
    <property type="evidence" value="ECO:0007669"/>
    <property type="project" value="UniProtKB-UniRule"/>
</dbReference>
<dbReference type="GO" id="GO:0019288">
    <property type="term" value="P:isopentenyl diphosphate biosynthetic process, methylerythritol 4-phosphate pathway"/>
    <property type="evidence" value="ECO:0007669"/>
    <property type="project" value="UniProtKB-UniRule"/>
</dbReference>
<dbReference type="GO" id="GO:0016114">
    <property type="term" value="P:terpenoid biosynthetic process"/>
    <property type="evidence" value="ECO:0007669"/>
    <property type="project" value="InterPro"/>
</dbReference>
<dbReference type="FunFam" id="3.30.230.10:FF:000029">
    <property type="entry name" value="4-diphosphocytidyl-2-C-methyl-D-erythritol kinase"/>
    <property type="match status" value="1"/>
</dbReference>
<dbReference type="FunFam" id="3.30.70.890:FF:000006">
    <property type="entry name" value="4-diphosphocytidyl-2-C-methyl-D-erythritol kinase"/>
    <property type="match status" value="1"/>
</dbReference>
<dbReference type="Gene3D" id="3.30.230.10">
    <property type="match status" value="1"/>
</dbReference>
<dbReference type="Gene3D" id="3.30.70.890">
    <property type="entry name" value="GHMP kinase, C-terminal domain"/>
    <property type="match status" value="1"/>
</dbReference>
<dbReference type="HAMAP" id="MF_00061">
    <property type="entry name" value="IspE"/>
    <property type="match status" value="1"/>
</dbReference>
<dbReference type="InterPro" id="IPR013750">
    <property type="entry name" value="GHMP_kinase_C_dom"/>
</dbReference>
<dbReference type="InterPro" id="IPR036554">
    <property type="entry name" value="GHMP_kinase_C_sf"/>
</dbReference>
<dbReference type="InterPro" id="IPR006204">
    <property type="entry name" value="GHMP_kinase_N_dom"/>
</dbReference>
<dbReference type="InterPro" id="IPR004424">
    <property type="entry name" value="IspE"/>
</dbReference>
<dbReference type="InterPro" id="IPR020568">
    <property type="entry name" value="Ribosomal_Su5_D2-typ_SF"/>
</dbReference>
<dbReference type="InterPro" id="IPR014721">
    <property type="entry name" value="Ribsml_uS5_D2-typ_fold_subgr"/>
</dbReference>
<dbReference type="NCBIfam" id="TIGR00154">
    <property type="entry name" value="ispE"/>
    <property type="match status" value="1"/>
</dbReference>
<dbReference type="NCBIfam" id="NF011202">
    <property type="entry name" value="PRK14608.1"/>
    <property type="match status" value="1"/>
</dbReference>
<dbReference type="PANTHER" id="PTHR43527">
    <property type="entry name" value="4-DIPHOSPHOCYTIDYL-2-C-METHYL-D-ERYTHRITOL KINASE, CHLOROPLASTIC"/>
    <property type="match status" value="1"/>
</dbReference>
<dbReference type="PANTHER" id="PTHR43527:SF2">
    <property type="entry name" value="4-DIPHOSPHOCYTIDYL-2-C-METHYL-D-ERYTHRITOL KINASE, CHLOROPLASTIC"/>
    <property type="match status" value="1"/>
</dbReference>
<dbReference type="Pfam" id="PF08544">
    <property type="entry name" value="GHMP_kinases_C"/>
    <property type="match status" value="1"/>
</dbReference>
<dbReference type="Pfam" id="PF00288">
    <property type="entry name" value="GHMP_kinases_N"/>
    <property type="match status" value="1"/>
</dbReference>
<dbReference type="PIRSF" id="PIRSF010376">
    <property type="entry name" value="IspE"/>
    <property type="match status" value="1"/>
</dbReference>
<dbReference type="SUPFAM" id="SSF55060">
    <property type="entry name" value="GHMP Kinase, C-terminal domain"/>
    <property type="match status" value="1"/>
</dbReference>
<dbReference type="SUPFAM" id="SSF54211">
    <property type="entry name" value="Ribosomal protein S5 domain 2-like"/>
    <property type="match status" value="1"/>
</dbReference>
<organism>
    <name type="scientific">Listeria monocytogenes serovar 1/2a (strain ATCC BAA-679 / EGD-e)</name>
    <dbReference type="NCBI Taxonomy" id="169963"/>
    <lineage>
        <taxon>Bacteria</taxon>
        <taxon>Bacillati</taxon>
        <taxon>Bacillota</taxon>
        <taxon>Bacilli</taxon>
        <taxon>Bacillales</taxon>
        <taxon>Listeriaceae</taxon>
        <taxon>Listeria</taxon>
    </lineage>
</organism>
<protein>
    <recommendedName>
        <fullName evidence="1">4-diphosphocytidyl-2-C-methyl-D-erythritol kinase</fullName>
        <shortName evidence="1">CMK</shortName>
        <ecNumber evidence="1">2.7.1.148</ecNumber>
    </recommendedName>
    <alternativeName>
        <fullName evidence="1">4-(cytidine-5'-diphospho)-2-C-methyl-D-erythritol kinase</fullName>
    </alternativeName>
</protein>
<proteinExistence type="inferred from homology"/>
<gene>
    <name evidence="1" type="primary">ispE</name>
    <name type="ordered locus">lmo0190</name>
</gene>
<name>ISPE_LISMO</name>
<keyword id="KW-0067">ATP-binding</keyword>
<keyword id="KW-0414">Isoprene biosynthesis</keyword>
<keyword id="KW-0418">Kinase</keyword>
<keyword id="KW-0547">Nucleotide-binding</keyword>
<keyword id="KW-1185">Reference proteome</keyword>
<keyword id="KW-0808">Transferase</keyword>
<feature type="chain" id="PRO_0000189232" description="4-diphosphocytidyl-2-C-methyl-D-erythritol kinase">
    <location>
        <begin position="1"/>
        <end position="293"/>
    </location>
</feature>
<feature type="active site" evidence="1">
    <location>
        <position position="10"/>
    </location>
</feature>
<feature type="active site" evidence="1">
    <location>
        <position position="136"/>
    </location>
</feature>
<feature type="binding site" evidence="1">
    <location>
        <begin position="94"/>
        <end position="104"/>
    </location>
    <ligand>
        <name>ATP</name>
        <dbReference type="ChEBI" id="CHEBI:30616"/>
    </ligand>
</feature>
<evidence type="ECO:0000255" key="1">
    <source>
        <dbReference type="HAMAP-Rule" id="MF_00061"/>
    </source>
</evidence>
<reference key="1">
    <citation type="journal article" date="2001" name="Science">
        <title>Comparative genomics of Listeria species.</title>
        <authorList>
            <person name="Glaser P."/>
            <person name="Frangeul L."/>
            <person name="Buchrieser C."/>
            <person name="Rusniok C."/>
            <person name="Amend A."/>
            <person name="Baquero F."/>
            <person name="Berche P."/>
            <person name="Bloecker H."/>
            <person name="Brandt P."/>
            <person name="Chakraborty T."/>
            <person name="Charbit A."/>
            <person name="Chetouani F."/>
            <person name="Couve E."/>
            <person name="de Daruvar A."/>
            <person name="Dehoux P."/>
            <person name="Domann E."/>
            <person name="Dominguez-Bernal G."/>
            <person name="Duchaud E."/>
            <person name="Durant L."/>
            <person name="Dussurget O."/>
            <person name="Entian K.-D."/>
            <person name="Fsihi H."/>
            <person name="Garcia-del Portillo F."/>
            <person name="Garrido P."/>
            <person name="Gautier L."/>
            <person name="Goebel W."/>
            <person name="Gomez-Lopez N."/>
            <person name="Hain T."/>
            <person name="Hauf J."/>
            <person name="Jackson D."/>
            <person name="Jones L.-M."/>
            <person name="Kaerst U."/>
            <person name="Kreft J."/>
            <person name="Kuhn M."/>
            <person name="Kunst F."/>
            <person name="Kurapkat G."/>
            <person name="Madueno E."/>
            <person name="Maitournam A."/>
            <person name="Mata Vicente J."/>
            <person name="Ng E."/>
            <person name="Nedjari H."/>
            <person name="Nordsiek G."/>
            <person name="Novella S."/>
            <person name="de Pablos B."/>
            <person name="Perez-Diaz J.-C."/>
            <person name="Purcell R."/>
            <person name="Remmel B."/>
            <person name="Rose M."/>
            <person name="Schlueter T."/>
            <person name="Simoes N."/>
            <person name="Tierrez A."/>
            <person name="Vazquez-Boland J.-A."/>
            <person name="Voss H."/>
            <person name="Wehland J."/>
            <person name="Cossart P."/>
        </authorList>
    </citation>
    <scope>NUCLEOTIDE SEQUENCE [LARGE SCALE GENOMIC DNA]</scope>
    <source>
        <strain>ATCC BAA-679 / EGD-e</strain>
    </source>
</reference>
<sequence>MKISITAPAKINLSLDALYKREDGYHEVEMVMTTIDLADRLYLERLDEDKIVLDVKAHFIPEDRRNLIYQAALLLKKRFDVKMGVRITIDKHIPVSAGLAGGSSDAAAALKGLNVIWELGLSIEELAEISSEIGSDIAFCVYGGTALATGRGEKISALPNIPGCWIVLAKPSISVSTPTIYKELQVDNVEHPDTQKMIESIKNGDLDGIFAATGNVLESVTLEKNPQVKRIKDRMLAFGAEAALMSGSGPTVFALIKQYSRAKRVYNGLRGFCEEVYMVRPWSEGENDTNINY</sequence>
<accession>Q8YAE1</accession>
<comment type="function">
    <text evidence="1">Catalyzes the phosphorylation of the position 2 hydroxy group of 4-diphosphocytidyl-2C-methyl-D-erythritol.</text>
</comment>
<comment type="catalytic activity">
    <reaction evidence="1">
        <text>4-CDP-2-C-methyl-D-erythritol + ATP = 4-CDP-2-C-methyl-D-erythritol 2-phosphate + ADP + H(+)</text>
        <dbReference type="Rhea" id="RHEA:18437"/>
        <dbReference type="ChEBI" id="CHEBI:15378"/>
        <dbReference type="ChEBI" id="CHEBI:30616"/>
        <dbReference type="ChEBI" id="CHEBI:57823"/>
        <dbReference type="ChEBI" id="CHEBI:57919"/>
        <dbReference type="ChEBI" id="CHEBI:456216"/>
        <dbReference type="EC" id="2.7.1.148"/>
    </reaction>
</comment>
<comment type="pathway">
    <text evidence="1">Isoprenoid biosynthesis; isopentenyl diphosphate biosynthesis via DXP pathway; isopentenyl diphosphate from 1-deoxy-D-xylulose 5-phosphate: step 3/6.</text>
</comment>
<comment type="similarity">
    <text evidence="1">Belongs to the GHMP kinase family. IspE subfamily.</text>
</comment>